<sequence length="247" mass="28093">MTRFALTLEFDGTPFMGLQRQKHGPSVQQAVEEAARATLNQDITLHSAGRTDTGVHALGMRSHFDAETDLTPFRLMGGLNAHLRPHPIAVTNCEIMPEDWHARFACIGRSYVYRIINRRAPLTIDRKRAWQVPQQLDHEAMQRAAQLLVGTHDFTTFRSTQCQAKDPVKSLDRLEVERDGDEIRVHAEARSFLHHQVRSMVGCLKLVGQGTWREEEVEEALLARDRQRLGLNAPPHGLYFVAAEYPR</sequence>
<organism>
    <name type="scientific">Erythrobacter litoralis (strain HTCC2594)</name>
    <dbReference type="NCBI Taxonomy" id="314225"/>
    <lineage>
        <taxon>Bacteria</taxon>
        <taxon>Pseudomonadati</taxon>
        <taxon>Pseudomonadota</taxon>
        <taxon>Alphaproteobacteria</taxon>
        <taxon>Sphingomonadales</taxon>
        <taxon>Erythrobacteraceae</taxon>
        <taxon>Erythrobacter/Porphyrobacter group</taxon>
        <taxon>Erythrobacter</taxon>
    </lineage>
</organism>
<feature type="chain" id="PRO_1000017081" description="tRNA pseudouridine synthase A">
    <location>
        <begin position="1"/>
        <end position="247"/>
    </location>
</feature>
<feature type="active site" description="Nucleophile" evidence="1">
    <location>
        <position position="52"/>
    </location>
</feature>
<feature type="binding site" evidence="1">
    <location>
        <position position="111"/>
    </location>
    <ligand>
        <name>substrate</name>
    </ligand>
</feature>
<keyword id="KW-0413">Isomerase</keyword>
<keyword id="KW-1185">Reference proteome</keyword>
<keyword id="KW-0819">tRNA processing</keyword>
<evidence type="ECO:0000255" key="1">
    <source>
        <dbReference type="HAMAP-Rule" id="MF_00171"/>
    </source>
</evidence>
<comment type="function">
    <text evidence="1">Formation of pseudouridine at positions 38, 39 and 40 in the anticodon stem and loop of transfer RNAs.</text>
</comment>
<comment type="catalytic activity">
    <reaction evidence="1">
        <text>uridine(38/39/40) in tRNA = pseudouridine(38/39/40) in tRNA</text>
        <dbReference type="Rhea" id="RHEA:22376"/>
        <dbReference type="Rhea" id="RHEA-COMP:10085"/>
        <dbReference type="Rhea" id="RHEA-COMP:10087"/>
        <dbReference type="ChEBI" id="CHEBI:65314"/>
        <dbReference type="ChEBI" id="CHEBI:65315"/>
        <dbReference type="EC" id="5.4.99.12"/>
    </reaction>
</comment>
<comment type="subunit">
    <text evidence="1">Homodimer.</text>
</comment>
<comment type="similarity">
    <text evidence="1">Belongs to the tRNA pseudouridine synthase TruA family.</text>
</comment>
<protein>
    <recommendedName>
        <fullName evidence="1">tRNA pseudouridine synthase A</fullName>
        <ecNumber evidence="1">5.4.99.12</ecNumber>
    </recommendedName>
    <alternativeName>
        <fullName evidence="1">tRNA pseudouridine(38-40) synthase</fullName>
    </alternativeName>
    <alternativeName>
        <fullName evidence="1">tRNA pseudouridylate synthase I</fullName>
    </alternativeName>
    <alternativeName>
        <fullName evidence="1">tRNA-uridine isomerase I</fullName>
    </alternativeName>
</protein>
<reference key="1">
    <citation type="journal article" date="2009" name="J. Bacteriol.">
        <title>Complete genome sequence of Erythrobacter litoralis HTCC2594.</title>
        <authorList>
            <person name="Oh H.M."/>
            <person name="Giovannoni S.J."/>
            <person name="Ferriera S."/>
            <person name="Johnson J."/>
            <person name="Cho J.C."/>
        </authorList>
    </citation>
    <scope>NUCLEOTIDE SEQUENCE [LARGE SCALE GENOMIC DNA]</scope>
    <source>
        <strain>HTCC2594</strain>
    </source>
</reference>
<accession>Q2NCT7</accession>
<gene>
    <name evidence="1" type="primary">truA</name>
    <name type="ordered locus">ELI_02060</name>
</gene>
<name>TRUA_ERYLH</name>
<dbReference type="EC" id="5.4.99.12" evidence="1"/>
<dbReference type="EMBL" id="CP000157">
    <property type="protein sequence ID" value="ABC62504.1"/>
    <property type="molecule type" value="Genomic_DNA"/>
</dbReference>
<dbReference type="RefSeq" id="WP_011413380.1">
    <property type="nucleotide sequence ID" value="NC_007722.1"/>
</dbReference>
<dbReference type="SMR" id="Q2NCT7"/>
<dbReference type="STRING" id="314225.ELI_02060"/>
<dbReference type="KEGG" id="eli:ELI_02060"/>
<dbReference type="eggNOG" id="COG0101">
    <property type="taxonomic scope" value="Bacteria"/>
</dbReference>
<dbReference type="HOGENOM" id="CLU_014673_0_2_5"/>
<dbReference type="OrthoDB" id="9811823at2"/>
<dbReference type="Proteomes" id="UP000008808">
    <property type="component" value="Chromosome"/>
</dbReference>
<dbReference type="GO" id="GO:0003723">
    <property type="term" value="F:RNA binding"/>
    <property type="evidence" value="ECO:0007669"/>
    <property type="project" value="InterPro"/>
</dbReference>
<dbReference type="GO" id="GO:0160147">
    <property type="term" value="F:tRNA pseudouridine(38-40) synthase activity"/>
    <property type="evidence" value="ECO:0007669"/>
    <property type="project" value="UniProtKB-EC"/>
</dbReference>
<dbReference type="GO" id="GO:0031119">
    <property type="term" value="P:tRNA pseudouridine synthesis"/>
    <property type="evidence" value="ECO:0007669"/>
    <property type="project" value="UniProtKB-UniRule"/>
</dbReference>
<dbReference type="CDD" id="cd02570">
    <property type="entry name" value="PseudoU_synth_EcTruA"/>
    <property type="match status" value="1"/>
</dbReference>
<dbReference type="FunFam" id="3.30.70.580:FF:000001">
    <property type="entry name" value="tRNA pseudouridine synthase A"/>
    <property type="match status" value="1"/>
</dbReference>
<dbReference type="Gene3D" id="3.30.70.660">
    <property type="entry name" value="Pseudouridine synthase I, catalytic domain, C-terminal subdomain"/>
    <property type="match status" value="1"/>
</dbReference>
<dbReference type="Gene3D" id="3.30.70.580">
    <property type="entry name" value="Pseudouridine synthase I, catalytic domain, N-terminal subdomain"/>
    <property type="match status" value="1"/>
</dbReference>
<dbReference type="HAMAP" id="MF_00171">
    <property type="entry name" value="TruA"/>
    <property type="match status" value="1"/>
</dbReference>
<dbReference type="InterPro" id="IPR020103">
    <property type="entry name" value="PsdUridine_synth_cat_dom_sf"/>
</dbReference>
<dbReference type="InterPro" id="IPR001406">
    <property type="entry name" value="PsdUridine_synth_TruA"/>
</dbReference>
<dbReference type="InterPro" id="IPR020097">
    <property type="entry name" value="PsdUridine_synth_TruA_a/b_dom"/>
</dbReference>
<dbReference type="InterPro" id="IPR020095">
    <property type="entry name" value="PsdUridine_synth_TruA_C"/>
</dbReference>
<dbReference type="InterPro" id="IPR020094">
    <property type="entry name" value="TruA/RsuA/RluB/E/F_N"/>
</dbReference>
<dbReference type="NCBIfam" id="TIGR00071">
    <property type="entry name" value="hisT_truA"/>
    <property type="match status" value="1"/>
</dbReference>
<dbReference type="PANTHER" id="PTHR11142">
    <property type="entry name" value="PSEUDOURIDYLATE SYNTHASE"/>
    <property type="match status" value="1"/>
</dbReference>
<dbReference type="PANTHER" id="PTHR11142:SF0">
    <property type="entry name" value="TRNA PSEUDOURIDINE SYNTHASE-LIKE 1"/>
    <property type="match status" value="1"/>
</dbReference>
<dbReference type="Pfam" id="PF01416">
    <property type="entry name" value="PseudoU_synth_1"/>
    <property type="match status" value="2"/>
</dbReference>
<dbReference type="PIRSF" id="PIRSF001430">
    <property type="entry name" value="tRNA_psdUrid_synth"/>
    <property type="match status" value="1"/>
</dbReference>
<dbReference type="SUPFAM" id="SSF55120">
    <property type="entry name" value="Pseudouridine synthase"/>
    <property type="match status" value="1"/>
</dbReference>
<proteinExistence type="inferred from homology"/>